<reference key="1">
    <citation type="submission" date="2002-12" db="EMBL/GenBank/DDBJ databases">
        <authorList>
            <consortium name="NIH - Xenopus Gene Collection (XGC) project"/>
        </authorList>
    </citation>
    <scope>NUCLEOTIDE SEQUENCE [LARGE SCALE MRNA]</scope>
    <source>
        <tissue>Embryo</tissue>
    </source>
</reference>
<protein>
    <recommendedName>
        <fullName evidence="1">Adenylate kinase 2, mitochondrial</fullName>
        <shortName evidence="1">AK 2</shortName>
        <ecNumber evidence="1">2.7.4.3</ecNumber>
    </recommendedName>
    <alternativeName>
        <fullName evidence="1">ATP-AMP transphosphorylase 2</fullName>
    </alternativeName>
    <alternativeName>
        <fullName evidence="1">ATP:AMP phosphotransferase</fullName>
    </alternativeName>
    <alternativeName>
        <fullName evidence="1">Adenylate monophosphate kinase</fullName>
    </alternativeName>
</protein>
<sequence>MAPREAAPAERGSMMEGIRAILLGPPGAGKGTQAPKLAEKYCVCHLATGDMLRAMVASGSELGKRLKATMDAGKLVSDEMVVELIEKNLDTPPCKKGFLLDGFPRTVKQAEMLDELLEKRQEKLDSVIEFKVDDSLLVRRICGRLIHASSGRSYHEEFNPPKEPMKDDVTGEALIRRSDDNESTLKSRLEAYHTMTSPLVDYYQRHGIHTAVDAAQSPDVVFASILAAFSKAHCKDLVLFV</sequence>
<evidence type="ECO:0000255" key="1">
    <source>
        <dbReference type="HAMAP-Rule" id="MF_03168"/>
    </source>
</evidence>
<comment type="function">
    <text evidence="1">Catalyzes the reversible transfer of the terminal phosphate group between ATP and AMP. Plays an important role in cellular energy homeostasis and in adenine nucleotide metabolism. Adenylate kinase activity is critical for regulation of the phosphate utilization and the AMP de novo biosynthesis pathways. Plays a key role in hematopoiesis.</text>
</comment>
<comment type="catalytic activity">
    <reaction evidence="1">
        <text>AMP + ATP = 2 ADP</text>
        <dbReference type="Rhea" id="RHEA:12973"/>
        <dbReference type="ChEBI" id="CHEBI:30616"/>
        <dbReference type="ChEBI" id="CHEBI:456215"/>
        <dbReference type="ChEBI" id="CHEBI:456216"/>
        <dbReference type="EC" id="2.7.4.3"/>
    </reaction>
</comment>
<comment type="subunit">
    <text evidence="1">Monomer.</text>
</comment>
<comment type="subcellular location">
    <subcellularLocation>
        <location evidence="1">Mitochondrion intermembrane space</location>
    </subcellularLocation>
</comment>
<comment type="domain">
    <text evidence="1">Consists of three domains, a large central CORE domain and two small peripheral domains, NMPbind and LID, which undergo movements during catalysis. The LID domain closes over the site of phosphoryl transfer upon ATP binding. Assembling and dissambling the active center during each catalytic cycle provides an effective means to prevent ATP hydrolysis.</text>
</comment>
<comment type="similarity">
    <text evidence="1">Belongs to the adenylate kinase family. AK2 subfamily.</text>
</comment>
<accession>Q8AVD3</accession>
<dbReference type="EC" id="2.7.4.3" evidence="1"/>
<dbReference type="EMBL" id="BC041509">
    <property type="protein sequence ID" value="AAH41509.1"/>
    <property type="molecule type" value="mRNA"/>
</dbReference>
<dbReference type="RefSeq" id="NP_001080232.1">
    <property type="nucleotide sequence ID" value="NM_001086763.1"/>
</dbReference>
<dbReference type="SMR" id="Q8AVD3"/>
<dbReference type="DNASU" id="379924"/>
<dbReference type="GeneID" id="379924"/>
<dbReference type="KEGG" id="xla:379924"/>
<dbReference type="AGR" id="Xenbase:XB-GENE-6254479"/>
<dbReference type="CTD" id="379924"/>
<dbReference type="Xenbase" id="XB-GENE-6254479">
    <property type="gene designation" value="ak2.S"/>
</dbReference>
<dbReference type="OrthoDB" id="439792at2759"/>
<dbReference type="Proteomes" id="UP000186698">
    <property type="component" value="Chromosome 2S"/>
</dbReference>
<dbReference type="Bgee" id="379924">
    <property type="expression patterns" value="Expressed in zone of skin and 19 other cell types or tissues"/>
</dbReference>
<dbReference type="GO" id="GO:0005737">
    <property type="term" value="C:cytoplasm"/>
    <property type="evidence" value="ECO:0000318"/>
    <property type="project" value="GO_Central"/>
</dbReference>
<dbReference type="GO" id="GO:0005758">
    <property type="term" value="C:mitochondrial intermembrane space"/>
    <property type="evidence" value="ECO:0007669"/>
    <property type="project" value="UniProtKB-SubCell"/>
</dbReference>
<dbReference type="GO" id="GO:0005739">
    <property type="term" value="C:mitochondrion"/>
    <property type="evidence" value="ECO:0000318"/>
    <property type="project" value="GO_Central"/>
</dbReference>
<dbReference type="GO" id="GO:0004017">
    <property type="term" value="F:adenylate kinase activity"/>
    <property type="evidence" value="ECO:0000318"/>
    <property type="project" value="GO_Central"/>
</dbReference>
<dbReference type="GO" id="GO:0005524">
    <property type="term" value="F:ATP binding"/>
    <property type="evidence" value="ECO:0007669"/>
    <property type="project" value="UniProtKB-KW"/>
</dbReference>
<dbReference type="GO" id="GO:0006172">
    <property type="term" value="P:ADP biosynthetic process"/>
    <property type="evidence" value="ECO:0000318"/>
    <property type="project" value="GO_Central"/>
</dbReference>
<dbReference type="GO" id="GO:0046033">
    <property type="term" value="P:AMP metabolic process"/>
    <property type="evidence" value="ECO:0007669"/>
    <property type="project" value="UniProtKB-UniRule"/>
</dbReference>
<dbReference type="GO" id="GO:0046034">
    <property type="term" value="P:ATP metabolic process"/>
    <property type="evidence" value="ECO:0007669"/>
    <property type="project" value="UniProtKB-UniRule"/>
</dbReference>
<dbReference type="CDD" id="cd01428">
    <property type="entry name" value="ADK"/>
    <property type="match status" value="1"/>
</dbReference>
<dbReference type="FunFam" id="3.40.50.300:FF:000106">
    <property type="entry name" value="Adenylate kinase mitochondrial"/>
    <property type="match status" value="1"/>
</dbReference>
<dbReference type="Gene3D" id="3.40.50.300">
    <property type="entry name" value="P-loop containing nucleotide triphosphate hydrolases"/>
    <property type="match status" value="1"/>
</dbReference>
<dbReference type="HAMAP" id="MF_00235">
    <property type="entry name" value="Adenylate_kinase_Adk"/>
    <property type="match status" value="1"/>
</dbReference>
<dbReference type="HAMAP" id="MF_03168">
    <property type="entry name" value="Adenylate_kinase_AK2"/>
    <property type="match status" value="1"/>
</dbReference>
<dbReference type="InterPro" id="IPR006259">
    <property type="entry name" value="Adenyl_kin_sub"/>
</dbReference>
<dbReference type="InterPro" id="IPR000850">
    <property type="entry name" value="Adenylat/UMP-CMP_kin"/>
</dbReference>
<dbReference type="InterPro" id="IPR033690">
    <property type="entry name" value="Adenylat_kinase_CS"/>
</dbReference>
<dbReference type="InterPro" id="IPR007862">
    <property type="entry name" value="Adenylate_kinase_lid-dom"/>
</dbReference>
<dbReference type="InterPro" id="IPR028587">
    <property type="entry name" value="AK2"/>
</dbReference>
<dbReference type="InterPro" id="IPR027417">
    <property type="entry name" value="P-loop_NTPase"/>
</dbReference>
<dbReference type="NCBIfam" id="TIGR01351">
    <property type="entry name" value="adk"/>
    <property type="match status" value="1"/>
</dbReference>
<dbReference type="NCBIfam" id="NF001380">
    <property type="entry name" value="PRK00279.1-2"/>
    <property type="match status" value="1"/>
</dbReference>
<dbReference type="NCBIfam" id="NF001381">
    <property type="entry name" value="PRK00279.1-3"/>
    <property type="match status" value="1"/>
</dbReference>
<dbReference type="NCBIfam" id="NF011100">
    <property type="entry name" value="PRK14527.1"/>
    <property type="match status" value="1"/>
</dbReference>
<dbReference type="PANTHER" id="PTHR23359">
    <property type="entry name" value="NUCLEOTIDE KINASE"/>
    <property type="match status" value="1"/>
</dbReference>
<dbReference type="Pfam" id="PF00406">
    <property type="entry name" value="ADK"/>
    <property type="match status" value="1"/>
</dbReference>
<dbReference type="Pfam" id="PF05191">
    <property type="entry name" value="ADK_lid"/>
    <property type="match status" value="1"/>
</dbReference>
<dbReference type="PRINTS" id="PR00094">
    <property type="entry name" value="ADENYLTKNASE"/>
</dbReference>
<dbReference type="SUPFAM" id="SSF52540">
    <property type="entry name" value="P-loop containing nucleoside triphosphate hydrolases"/>
    <property type="match status" value="1"/>
</dbReference>
<dbReference type="PROSITE" id="PS00113">
    <property type="entry name" value="ADENYLATE_KINASE"/>
    <property type="match status" value="1"/>
</dbReference>
<organism>
    <name type="scientific">Xenopus laevis</name>
    <name type="common">African clawed frog</name>
    <dbReference type="NCBI Taxonomy" id="8355"/>
    <lineage>
        <taxon>Eukaryota</taxon>
        <taxon>Metazoa</taxon>
        <taxon>Chordata</taxon>
        <taxon>Craniata</taxon>
        <taxon>Vertebrata</taxon>
        <taxon>Euteleostomi</taxon>
        <taxon>Amphibia</taxon>
        <taxon>Batrachia</taxon>
        <taxon>Anura</taxon>
        <taxon>Pipoidea</taxon>
        <taxon>Pipidae</taxon>
        <taxon>Xenopodinae</taxon>
        <taxon>Xenopus</taxon>
        <taxon>Xenopus</taxon>
    </lineage>
</organism>
<proteinExistence type="evidence at transcript level"/>
<name>KAD2_XENLA</name>
<gene>
    <name type="primary">ak2</name>
</gene>
<feature type="chain" id="PRO_0000365697" description="Adenylate kinase 2, mitochondrial">
    <location>
        <begin position="1"/>
        <end position="241"/>
    </location>
</feature>
<feature type="region of interest" description="NMP" evidence="1">
    <location>
        <begin position="47"/>
        <end position="76"/>
    </location>
</feature>
<feature type="region of interest" description="LID" evidence="1">
    <location>
        <begin position="143"/>
        <end position="180"/>
    </location>
</feature>
<feature type="binding site" evidence="1">
    <location>
        <begin position="27"/>
        <end position="32"/>
    </location>
    <ligand>
        <name>ATP</name>
        <dbReference type="ChEBI" id="CHEBI:30616"/>
    </ligand>
</feature>
<feature type="binding site" evidence="1">
    <location>
        <position position="48"/>
    </location>
    <ligand>
        <name>AMP</name>
        <dbReference type="ChEBI" id="CHEBI:456215"/>
    </ligand>
</feature>
<feature type="binding site" evidence="1">
    <location>
        <position position="53"/>
    </location>
    <ligand>
        <name>AMP</name>
        <dbReference type="ChEBI" id="CHEBI:456215"/>
    </ligand>
</feature>
<feature type="binding site" evidence="1">
    <location>
        <begin position="74"/>
        <end position="76"/>
    </location>
    <ligand>
        <name>AMP</name>
        <dbReference type="ChEBI" id="CHEBI:456215"/>
    </ligand>
</feature>
<feature type="binding site" evidence="1">
    <location>
        <begin position="102"/>
        <end position="105"/>
    </location>
    <ligand>
        <name>AMP</name>
        <dbReference type="ChEBI" id="CHEBI:456215"/>
    </ligand>
</feature>
<feature type="binding site" evidence="1">
    <location>
        <position position="109"/>
    </location>
    <ligand>
        <name>AMP</name>
        <dbReference type="ChEBI" id="CHEBI:456215"/>
    </ligand>
</feature>
<feature type="binding site" evidence="1">
    <location>
        <position position="144"/>
    </location>
    <ligand>
        <name>ATP</name>
        <dbReference type="ChEBI" id="CHEBI:30616"/>
    </ligand>
</feature>
<feature type="binding site" evidence="1">
    <location>
        <begin position="153"/>
        <end position="154"/>
    </location>
    <ligand>
        <name>ATP</name>
        <dbReference type="ChEBI" id="CHEBI:30616"/>
    </ligand>
</feature>
<feature type="binding site" evidence="1">
    <location>
        <position position="177"/>
    </location>
    <ligand>
        <name>AMP</name>
        <dbReference type="ChEBI" id="CHEBI:456215"/>
    </ligand>
</feature>
<feature type="binding site" evidence="1">
    <location>
        <position position="188"/>
    </location>
    <ligand>
        <name>AMP</name>
        <dbReference type="ChEBI" id="CHEBI:456215"/>
    </ligand>
</feature>
<feature type="binding site" evidence="1">
    <location>
        <position position="216"/>
    </location>
    <ligand>
        <name>ATP</name>
        <dbReference type="ChEBI" id="CHEBI:30616"/>
    </ligand>
</feature>
<feature type="disulfide bond" evidence="1">
    <location>
        <begin position="44"/>
        <end position="94"/>
    </location>
</feature>
<keyword id="KW-0067">ATP-binding</keyword>
<keyword id="KW-1015">Disulfide bond</keyword>
<keyword id="KW-0418">Kinase</keyword>
<keyword id="KW-0496">Mitochondrion</keyword>
<keyword id="KW-0547">Nucleotide-binding</keyword>
<keyword id="KW-1185">Reference proteome</keyword>
<keyword id="KW-0808">Transferase</keyword>